<keyword id="KW-0222">Digestion</keyword>
<keyword id="KW-0903">Direct protein sequencing</keyword>
<keyword id="KW-1015">Disulfide bond</keyword>
<keyword id="KW-0442">Lipid degradation</keyword>
<keyword id="KW-0443">Lipid metabolism</keyword>
<keyword id="KW-0964">Secreted</keyword>
<organism>
    <name type="scientific">Squalus acanthias</name>
    <name type="common">Spiny dogfish</name>
    <dbReference type="NCBI Taxonomy" id="7797"/>
    <lineage>
        <taxon>Eukaryota</taxon>
        <taxon>Metazoa</taxon>
        <taxon>Chordata</taxon>
        <taxon>Craniata</taxon>
        <taxon>Vertebrata</taxon>
        <taxon>Chondrichthyes</taxon>
        <taxon>Elasmobranchii</taxon>
        <taxon>Squalomorphii</taxon>
        <taxon>Squaliformes</taxon>
        <taxon>Squalidae</taxon>
        <taxon>Squalus</taxon>
    </lineage>
</organism>
<feature type="chain" id="PRO_0000144832" description="Colipase">
    <location>
        <begin position="1"/>
        <end position="39" status="greater than"/>
    </location>
</feature>
<feature type="disulfide bond" evidence="1">
    <location>
        <begin position="16"/>
        <end position="27"/>
    </location>
</feature>
<feature type="disulfide bond" evidence="1">
    <location>
        <begin position="22"/>
        <end position="38"/>
    </location>
</feature>
<feature type="non-terminal residue">
    <location>
        <position position="39"/>
    </location>
</feature>
<proteinExistence type="evidence at protein level"/>
<comment type="function">
    <text>Colipase is a cofactor of pancreatic lipase. It allows the lipase to anchor itself to the lipid-water interface. Without colipase the enzyme is washed off by bile salts, which have an inhibitory effect on the lipase.</text>
</comment>
<comment type="subunit">
    <text>Forms a 1:1 stoichiometric complex with pancreatic lipase.</text>
</comment>
<comment type="subcellular location">
    <subcellularLocation>
        <location>Secreted</location>
    </subcellularLocation>
</comment>
<comment type="tissue specificity">
    <text>Expressed by the pancreas.</text>
</comment>
<comment type="similarity">
    <text evidence="1">Belongs to the colipase family.</text>
</comment>
<evidence type="ECO:0000255" key="1">
    <source>
        <dbReference type="PROSITE-ProRule" id="PRU00674"/>
    </source>
</evidence>
<sequence>APERGLFLNLSAGELCVGSFQCKSSCCQRETGLSLARCA</sequence>
<dbReference type="PIR" id="A05331">
    <property type="entry name" value="A05331"/>
</dbReference>
<dbReference type="SMR" id="P11149"/>
<dbReference type="GO" id="GO:0005576">
    <property type="term" value="C:extracellular region"/>
    <property type="evidence" value="ECO:0007669"/>
    <property type="project" value="UniProtKB-SubCell"/>
</dbReference>
<dbReference type="GO" id="GO:0008047">
    <property type="term" value="F:enzyme activator activity"/>
    <property type="evidence" value="ECO:0007669"/>
    <property type="project" value="InterPro"/>
</dbReference>
<dbReference type="GO" id="GO:0007586">
    <property type="term" value="P:digestion"/>
    <property type="evidence" value="ECO:0007669"/>
    <property type="project" value="UniProtKB-KW"/>
</dbReference>
<dbReference type="GO" id="GO:0016042">
    <property type="term" value="P:lipid catabolic process"/>
    <property type="evidence" value="ECO:0007669"/>
    <property type="project" value="UniProtKB-KW"/>
</dbReference>
<dbReference type="Gene3D" id="2.10.80.10">
    <property type="entry name" value="Lipase, subunit A"/>
    <property type="match status" value="1"/>
</dbReference>
<dbReference type="InterPro" id="IPR001981">
    <property type="entry name" value="Colipase"/>
</dbReference>
<dbReference type="InterPro" id="IPR017913">
    <property type="entry name" value="Colipase_N"/>
</dbReference>
<dbReference type="Pfam" id="PF01114">
    <property type="entry name" value="Colipase"/>
    <property type="match status" value="1"/>
</dbReference>
<dbReference type="PRINTS" id="PR00128">
    <property type="entry name" value="COLIPASE"/>
</dbReference>
<dbReference type="SUPFAM" id="SSF57190">
    <property type="entry name" value="Colipase-like"/>
    <property type="match status" value="1"/>
</dbReference>
<dbReference type="PROSITE" id="PS51342">
    <property type="entry name" value="COLIPASE_2"/>
    <property type="match status" value="1"/>
</dbReference>
<accession>P11149</accession>
<name>COL_SQUAC</name>
<reference key="1">
    <citation type="journal article" date="1984" name="Biochim. Biophys. Acta">
        <title>Purification and characterization of pancreatic colipase from the dogfish (Squalus acanthius).</title>
        <authorList>
            <person name="Sternby B."/>
            <person name="Engstroem A."/>
            <person name="Hellman U."/>
        </authorList>
    </citation>
    <scope>PROTEIN SEQUENCE</scope>
    <source>
        <tissue>Pancreas</tissue>
    </source>
</reference>
<protein>
    <recommendedName>
        <fullName>Colipase</fullName>
    </recommendedName>
</protein>